<feature type="chain" id="PRO_0000413593" description="F420-dependent glucose-6-phosphate dehydrogenase">
    <location>
        <begin position="1"/>
        <end position="336"/>
    </location>
</feature>
<feature type="active site" description="Proton donor" evidence="1">
    <location>
        <position position="40"/>
    </location>
</feature>
<feature type="active site" description="Proton acceptor" evidence="1">
    <location>
        <position position="109"/>
    </location>
</feature>
<feature type="binding site" evidence="1">
    <location>
        <position position="39"/>
    </location>
    <ligand>
        <name>coenzyme F420-(gamma-Glu)n</name>
        <dbReference type="ChEBI" id="CHEBI:133980"/>
    </ligand>
</feature>
<feature type="binding site" evidence="1">
    <location>
        <position position="76"/>
    </location>
    <ligand>
        <name>coenzyme F420-(gamma-Glu)n</name>
        <dbReference type="ChEBI" id="CHEBI:133980"/>
    </ligand>
</feature>
<feature type="binding site" evidence="1">
    <location>
        <begin position="107"/>
        <end position="108"/>
    </location>
    <ligand>
        <name>coenzyme F420-(gamma-Glu)n</name>
        <dbReference type="ChEBI" id="CHEBI:133980"/>
    </ligand>
</feature>
<feature type="binding site" evidence="1">
    <location>
        <position position="112"/>
    </location>
    <ligand>
        <name>coenzyme F420-(gamma-Glu)n</name>
        <dbReference type="ChEBI" id="CHEBI:133980"/>
    </ligand>
</feature>
<feature type="binding site" evidence="1">
    <location>
        <begin position="177"/>
        <end position="178"/>
    </location>
    <ligand>
        <name>coenzyme F420-(gamma-Glu)n</name>
        <dbReference type="ChEBI" id="CHEBI:133980"/>
    </ligand>
</feature>
<feature type="binding site" evidence="1">
    <location>
        <begin position="180"/>
        <end position="181"/>
    </location>
    <ligand>
        <name>coenzyme F420-(gamma-Glu)n</name>
        <dbReference type="ChEBI" id="CHEBI:133980"/>
    </ligand>
</feature>
<feature type="binding site" evidence="1">
    <location>
        <position position="195"/>
    </location>
    <ligand>
        <name>substrate</name>
    </ligand>
</feature>
<feature type="binding site" evidence="1">
    <location>
        <position position="198"/>
    </location>
    <ligand>
        <name>substrate</name>
    </ligand>
</feature>
<feature type="binding site" evidence="1">
    <location>
        <position position="259"/>
    </location>
    <ligand>
        <name>substrate</name>
    </ligand>
</feature>
<feature type="binding site" evidence="1">
    <location>
        <position position="283"/>
    </location>
    <ligand>
        <name>substrate</name>
    </ligand>
</feature>
<dbReference type="EC" id="1.1.98.2" evidence="1"/>
<dbReference type="EMBL" id="AF152396">
    <property type="protein sequence ID" value="AAD38169.1"/>
    <property type="molecule type" value="Genomic_DNA"/>
</dbReference>
<dbReference type="PIR" id="T44605">
    <property type="entry name" value="T44605"/>
</dbReference>
<dbReference type="RefSeq" id="WP_038563077.1">
    <property type="nucleotide sequence ID" value="NZ_LZIW01000201.1"/>
</dbReference>
<dbReference type="SMR" id="Q9XC11"/>
<dbReference type="STRING" id="1766.XA26_56510"/>
<dbReference type="GeneID" id="93416157"/>
<dbReference type="GO" id="GO:0070967">
    <property type="term" value="F:coenzyme F420 binding"/>
    <property type="evidence" value="ECO:0007669"/>
    <property type="project" value="UniProtKB-UniRule"/>
</dbReference>
<dbReference type="GO" id="GO:0052749">
    <property type="term" value="F:glucose-6-phosphate dehydrogenase (coenzyme F420) activity"/>
    <property type="evidence" value="ECO:0007669"/>
    <property type="project" value="UniProtKB-EC"/>
</dbReference>
<dbReference type="GO" id="GO:0016705">
    <property type="term" value="F:oxidoreductase activity, acting on paired donors, with incorporation or reduction of molecular oxygen"/>
    <property type="evidence" value="ECO:0007669"/>
    <property type="project" value="InterPro"/>
</dbReference>
<dbReference type="GO" id="GO:0005975">
    <property type="term" value="P:carbohydrate metabolic process"/>
    <property type="evidence" value="ECO:0007669"/>
    <property type="project" value="UniProtKB-UniRule"/>
</dbReference>
<dbReference type="CDD" id="cd01097">
    <property type="entry name" value="Tetrahydromethanopterin_reductase"/>
    <property type="match status" value="1"/>
</dbReference>
<dbReference type="FunFam" id="3.20.20.30:FF:000004">
    <property type="entry name" value="F420-dependent glucose-6-phosphate dehydrogenase"/>
    <property type="match status" value="1"/>
</dbReference>
<dbReference type="Gene3D" id="3.20.20.30">
    <property type="entry name" value="Luciferase-like domain"/>
    <property type="match status" value="1"/>
</dbReference>
<dbReference type="HAMAP" id="MF_02123">
    <property type="entry name" value="F420_G6P_DH"/>
    <property type="match status" value="1"/>
</dbReference>
<dbReference type="InterPro" id="IPR019944">
    <property type="entry name" value="F420-dep_G6P_DH"/>
</dbReference>
<dbReference type="InterPro" id="IPR050564">
    <property type="entry name" value="F420-G6PD/mer"/>
</dbReference>
<dbReference type="InterPro" id="IPR019945">
    <property type="entry name" value="F420_G6P_DH-rel"/>
</dbReference>
<dbReference type="InterPro" id="IPR011251">
    <property type="entry name" value="Luciferase-like_dom"/>
</dbReference>
<dbReference type="InterPro" id="IPR036661">
    <property type="entry name" value="Luciferase-like_sf"/>
</dbReference>
<dbReference type="NCBIfam" id="TIGR03554">
    <property type="entry name" value="F420_G6P_DH"/>
    <property type="match status" value="1"/>
</dbReference>
<dbReference type="NCBIfam" id="TIGR03557">
    <property type="entry name" value="F420_G6P_family"/>
    <property type="match status" value="1"/>
</dbReference>
<dbReference type="PANTHER" id="PTHR43244">
    <property type="match status" value="1"/>
</dbReference>
<dbReference type="PANTHER" id="PTHR43244:SF1">
    <property type="entry name" value="5,10-METHYLENETETRAHYDROMETHANOPTERIN REDUCTASE"/>
    <property type="match status" value="1"/>
</dbReference>
<dbReference type="Pfam" id="PF00296">
    <property type="entry name" value="Bac_luciferase"/>
    <property type="match status" value="1"/>
</dbReference>
<dbReference type="SUPFAM" id="SSF51679">
    <property type="entry name" value="Bacterial luciferase-like"/>
    <property type="match status" value="1"/>
</dbReference>
<name>FGD_MYCFO</name>
<comment type="function">
    <text evidence="1">Catalyzes the coenzyme F420-dependent oxidation of glucose 6-phosphate (G6P) to 6-phosphogluconolactone. Appears to have a role in resistance to oxidative stress, via its consumption of G6P that serves as a source of reducing power to combat oxidative stress in mycobacteria.</text>
</comment>
<comment type="catalytic activity">
    <reaction evidence="1">
        <text>oxidized coenzyme F420-(gamma-L-Glu)(n) + D-glucose 6-phosphate + H(+) = 6-phospho-D-glucono-1,5-lactone + reduced coenzyme F420-(gamma-L-Glu)(n)</text>
        <dbReference type="Rhea" id="RHEA:27294"/>
        <dbReference type="Rhea" id="RHEA-COMP:12939"/>
        <dbReference type="Rhea" id="RHEA-COMP:14378"/>
        <dbReference type="ChEBI" id="CHEBI:15378"/>
        <dbReference type="ChEBI" id="CHEBI:57955"/>
        <dbReference type="ChEBI" id="CHEBI:61548"/>
        <dbReference type="ChEBI" id="CHEBI:133980"/>
        <dbReference type="ChEBI" id="CHEBI:139511"/>
        <dbReference type="EC" id="1.1.98.2"/>
    </reaction>
</comment>
<comment type="subunit">
    <text evidence="1">Homodimer.</text>
</comment>
<comment type="similarity">
    <text evidence="1">Belongs to the F420-dependent glucose-6-phosphate dehydrogenase family.</text>
</comment>
<gene>
    <name evidence="1" type="primary">fgd</name>
</gene>
<evidence type="ECO:0000255" key="1">
    <source>
        <dbReference type="HAMAP-Rule" id="MF_02123"/>
    </source>
</evidence>
<accession>Q9XC11</accession>
<proteinExistence type="inferred from homology"/>
<sequence>MAELKLGYKASAEQFAPRELVELAVLAEAAGMDSATVSDHFQPWRHEGGHAPFSLAWMTAVGERTQRLVLGTSVLTPTFRYNPAVIAQAFATMGCLYPGRVFLGVGTGEALNEIATGYIGQWPEFKERFARLRESVKLMRELWLGDRVDFDGEYYKLRGASIYDVPEGGIPVYIAAGGPVVAKYAGRAGDGFICTSGKGEELYKDKLIPAVREGAEAAGRNAEDIDRMIEIKISYDPDPELALENTRFWAPLSLTPEQKHSIDDPIEMEKAADALPIEQVAKRWIVASDPDEAVEKVGQYVTWGLNHLVFHAPGHDQRRFLDLFKKDLEPRLRKLG</sequence>
<reference key="1">
    <citation type="submission" date="2004-01" db="EMBL/GenBank/DDBJ databases">
        <title>The gene for F420-dependent glucose-6-phosphate dehydrogenase and a conserved upstream gene coding for a beta-lactamase-like protein in Mycobacterium species.</title>
        <authorList>
            <person name="Kim B.-K."/>
            <person name="Choi K.-P."/>
            <person name="Daniels L."/>
        </authorList>
    </citation>
    <scope>NUCLEOTIDE SEQUENCE [GENOMIC DNA]</scope>
    <source>
        <strain>ATCC 6841 / DSM 46621 / CIP 104534 / JCM 6387 / KCTC 9510 / NBRC 13159 / NCTC 10394</strain>
    </source>
</reference>
<keyword id="KW-0119">Carbohydrate metabolism</keyword>
<keyword id="KW-0560">Oxidoreductase</keyword>
<organism>
    <name type="scientific">Mycolicibacterium fortuitum</name>
    <name type="common">Mycobacterium fortuitum</name>
    <dbReference type="NCBI Taxonomy" id="1766"/>
    <lineage>
        <taxon>Bacteria</taxon>
        <taxon>Bacillati</taxon>
        <taxon>Actinomycetota</taxon>
        <taxon>Actinomycetes</taxon>
        <taxon>Mycobacteriales</taxon>
        <taxon>Mycobacteriaceae</taxon>
        <taxon>Mycolicibacterium</taxon>
    </lineage>
</organism>
<protein>
    <recommendedName>
        <fullName evidence="1">F420-dependent glucose-6-phosphate dehydrogenase</fullName>
        <shortName evidence="1">FGD</shortName>
        <shortName evidence="1">G6PD</shortName>
        <ecNumber evidence="1">1.1.98.2</ecNumber>
    </recommendedName>
</protein>